<proteinExistence type="inferred from homology"/>
<protein>
    <recommendedName>
        <fullName evidence="1">ATP synthase subunit beta</fullName>
        <ecNumber evidence="1">7.1.2.2</ecNumber>
    </recommendedName>
    <alternativeName>
        <fullName evidence="1">ATP synthase F1 sector subunit beta</fullName>
    </alternativeName>
    <alternativeName>
        <fullName evidence="1">F-ATPase subunit beta</fullName>
    </alternativeName>
</protein>
<comment type="function">
    <text evidence="1">Produces ATP from ADP in the presence of a proton gradient across the membrane. The catalytic sites are hosted primarily by the beta subunits.</text>
</comment>
<comment type="catalytic activity">
    <reaction evidence="1">
        <text>ATP + H2O + 4 H(+)(in) = ADP + phosphate + 5 H(+)(out)</text>
        <dbReference type="Rhea" id="RHEA:57720"/>
        <dbReference type="ChEBI" id="CHEBI:15377"/>
        <dbReference type="ChEBI" id="CHEBI:15378"/>
        <dbReference type="ChEBI" id="CHEBI:30616"/>
        <dbReference type="ChEBI" id="CHEBI:43474"/>
        <dbReference type="ChEBI" id="CHEBI:456216"/>
        <dbReference type="EC" id="7.1.2.2"/>
    </reaction>
</comment>
<comment type="subunit">
    <text evidence="1">F-type ATPases have 2 components, CF(1) - the catalytic core - and CF(0) - the membrane proton channel. CF(1) has five subunits: alpha(3), beta(3), gamma(1), delta(1), epsilon(1). CF(0) has four main subunits: a(1), b(1), b'(1) and c(9-12).</text>
</comment>
<comment type="subcellular location">
    <subcellularLocation>
        <location evidence="1">Cellular thylakoid membrane</location>
        <topology evidence="1">Peripheral membrane protein</topology>
    </subcellularLocation>
</comment>
<comment type="similarity">
    <text evidence="1">Belongs to the ATPase alpha/beta chains family.</text>
</comment>
<gene>
    <name evidence="1" type="primary">atpD</name>
    <name evidence="1" type="synonym">atpB</name>
    <name type="ordered locus">CYA_0420</name>
</gene>
<name>ATPB_SYNJA</name>
<keyword id="KW-0066">ATP synthesis</keyword>
<keyword id="KW-0067">ATP-binding</keyword>
<keyword id="KW-0139">CF(1)</keyword>
<keyword id="KW-0375">Hydrogen ion transport</keyword>
<keyword id="KW-0406">Ion transport</keyword>
<keyword id="KW-0472">Membrane</keyword>
<keyword id="KW-0547">Nucleotide-binding</keyword>
<keyword id="KW-0793">Thylakoid</keyword>
<keyword id="KW-1278">Translocase</keyword>
<keyword id="KW-0813">Transport</keyword>
<sequence length="477" mass="51589">MVTATATATNVGYITQVIGPVIDAEFPSGKLPEIYNALKVEATTESGLKVKVTFEVQQLLGDNRVRAVAMSSTDGLVRGMPVVDTGAPITVPVGEATLGRIFNVLGEPVDQGEPVQAKEFAPIHRSAPPFVELTVKPEPFETGIKVIDLLAPFKRGGKVGLFGGAGVGKTVLIQELIHNIAEEHSGLSVFAGVGERTREGNDLYNEMKESGVLDKVALVYGQMNEPPGARMRVGLTALTMAEYFRDVNKQDVLLFIDNIFRFVQAGSEVSALLGRMPSAVGYQPTLATEMGNLQERITSTKQGSITSVQAVYVPADDLTDPAPATTFAHLDSTVVLSRSLAAKGIYPAVDPLDSSSTILQADIVGEEHYNTAQAVKQTLQRYKELQDIIAILGLDELSEEDKLVVARARRIERFLSQPFFVAEVFTGSPGKYVKLEDTIKGFQRILSGELDHLPEQAFYLVGTIEEAIEKAEKLKSK</sequence>
<reference key="1">
    <citation type="journal article" date="2007" name="ISME J.">
        <title>Population level functional diversity in a microbial community revealed by comparative genomic and metagenomic analyses.</title>
        <authorList>
            <person name="Bhaya D."/>
            <person name="Grossman A.R."/>
            <person name="Steunou A.-S."/>
            <person name="Khuri N."/>
            <person name="Cohan F.M."/>
            <person name="Hamamura N."/>
            <person name="Melendrez M.C."/>
            <person name="Bateson M.M."/>
            <person name="Ward D.M."/>
            <person name="Heidelberg J.F."/>
        </authorList>
    </citation>
    <scope>NUCLEOTIDE SEQUENCE [LARGE SCALE GENOMIC DNA]</scope>
    <source>
        <strain>JA-3-3Ab</strain>
    </source>
</reference>
<dbReference type="EC" id="7.1.2.2" evidence="1"/>
<dbReference type="EMBL" id="CP000239">
    <property type="protein sequence ID" value="ABC98639.1"/>
    <property type="molecule type" value="Genomic_DNA"/>
</dbReference>
<dbReference type="RefSeq" id="WP_011429328.1">
    <property type="nucleotide sequence ID" value="NC_007775.1"/>
</dbReference>
<dbReference type="SMR" id="Q2JX57"/>
<dbReference type="STRING" id="321327.CYA_0420"/>
<dbReference type="KEGG" id="cya:CYA_0420"/>
<dbReference type="eggNOG" id="COG0055">
    <property type="taxonomic scope" value="Bacteria"/>
</dbReference>
<dbReference type="HOGENOM" id="CLU_022398_0_2_3"/>
<dbReference type="OrthoDB" id="9801639at2"/>
<dbReference type="Proteomes" id="UP000008818">
    <property type="component" value="Chromosome"/>
</dbReference>
<dbReference type="GO" id="GO:0031676">
    <property type="term" value="C:plasma membrane-derived thylakoid membrane"/>
    <property type="evidence" value="ECO:0007669"/>
    <property type="project" value="UniProtKB-SubCell"/>
</dbReference>
<dbReference type="GO" id="GO:0045259">
    <property type="term" value="C:proton-transporting ATP synthase complex"/>
    <property type="evidence" value="ECO:0007669"/>
    <property type="project" value="UniProtKB-KW"/>
</dbReference>
<dbReference type="GO" id="GO:0005524">
    <property type="term" value="F:ATP binding"/>
    <property type="evidence" value="ECO:0007669"/>
    <property type="project" value="UniProtKB-UniRule"/>
</dbReference>
<dbReference type="GO" id="GO:0016887">
    <property type="term" value="F:ATP hydrolysis activity"/>
    <property type="evidence" value="ECO:0007669"/>
    <property type="project" value="InterPro"/>
</dbReference>
<dbReference type="GO" id="GO:0046933">
    <property type="term" value="F:proton-transporting ATP synthase activity, rotational mechanism"/>
    <property type="evidence" value="ECO:0007669"/>
    <property type="project" value="UniProtKB-UniRule"/>
</dbReference>
<dbReference type="CDD" id="cd18110">
    <property type="entry name" value="ATP-synt_F1_beta_C"/>
    <property type="match status" value="1"/>
</dbReference>
<dbReference type="CDD" id="cd18115">
    <property type="entry name" value="ATP-synt_F1_beta_N"/>
    <property type="match status" value="1"/>
</dbReference>
<dbReference type="CDD" id="cd01133">
    <property type="entry name" value="F1-ATPase_beta_CD"/>
    <property type="match status" value="1"/>
</dbReference>
<dbReference type="FunFam" id="1.10.1140.10:FF:000001">
    <property type="entry name" value="ATP synthase subunit beta"/>
    <property type="match status" value="1"/>
</dbReference>
<dbReference type="FunFam" id="3.40.50.12240:FF:000006">
    <property type="entry name" value="ATP synthase subunit beta"/>
    <property type="match status" value="1"/>
</dbReference>
<dbReference type="FunFam" id="3.40.50.300:FF:000004">
    <property type="entry name" value="ATP synthase subunit beta"/>
    <property type="match status" value="1"/>
</dbReference>
<dbReference type="FunFam" id="2.40.10.170:FF:000002">
    <property type="entry name" value="ATP synthase subunit beta, chloroplastic"/>
    <property type="match status" value="1"/>
</dbReference>
<dbReference type="Gene3D" id="2.40.10.170">
    <property type="match status" value="1"/>
</dbReference>
<dbReference type="Gene3D" id="1.10.1140.10">
    <property type="entry name" value="Bovine Mitochondrial F1-atpase, Atp Synthase Beta Chain, Chain D, domain 3"/>
    <property type="match status" value="1"/>
</dbReference>
<dbReference type="Gene3D" id="3.40.50.300">
    <property type="entry name" value="P-loop containing nucleotide triphosphate hydrolases"/>
    <property type="match status" value="1"/>
</dbReference>
<dbReference type="HAMAP" id="MF_01347">
    <property type="entry name" value="ATP_synth_beta_bact"/>
    <property type="match status" value="1"/>
</dbReference>
<dbReference type="InterPro" id="IPR003593">
    <property type="entry name" value="AAA+_ATPase"/>
</dbReference>
<dbReference type="InterPro" id="IPR055190">
    <property type="entry name" value="ATP-synt_VA_C"/>
</dbReference>
<dbReference type="InterPro" id="IPR005722">
    <property type="entry name" value="ATP_synth_F1_bsu"/>
</dbReference>
<dbReference type="InterPro" id="IPR020003">
    <property type="entry name" value="ATPase_a/bsu_AS"/>
</dbReference>
<dbReference type="InterPro" id="IPR050053">
    <property type="entry name" value="ATPase_alpha/beta_chains"/>
</dbReference>
<dbReference type="InterPro" id="IPR004100">
    <property type="entry name" value="ATPase_F1/V1/A1_a/bsu_N"/>
</dbReference>
<dbReference type="InterPro" id="IPR036121">
    <property type="entry name" value="ATPase_F1/V1/A1_a/bsu_N_sf"/>
</dbReference>
<dbReference type="InterPro" id="IPR000194">
    <property type="entry name" value="ATPase_F1/V1/A1_a/bsu_nucl-bd"/>
</dbReference>
<dbReference type="InterPro" id="IPR024034">
    <property type="entry name" value="ATPase_F1/V1_b/a_C"/>
</dbReference>
<dbReference type="InterPro" id="IPR027417">
    <property type="entry name" value="P-loop_NTPase"/>
</dbReference>
<dbReference type="NCBIfam" id="TIGR01039">
    <property type="entry name" value="atpD"/>
    <property type="match status" value="1"/>
</dbReference>
<dbReference type="PANTHER" id="PTHR15184">
    <property type="entry name" value="ATP SYNTHASE"/>
    <property type="match status" value="1"/>
</dbReference>
<dbReference type="PANTHER" id="PTHR15184:SF71">
    <property type="entry name" value="ATP SYNTHASE SUBUNIT BETA, MITOCHONDRIAL"/>
    <property type="match status" value="1"/>
</dbReference>
<dbReference type="Pfam" id="PF00006">
    <property type="entry name" value="ATP-synt_ab"/>
    <property type="match status" value="1"/>
</dbReference>
<dbReference type="Pfam" id="PF02874">
    <property type="entry name" value="ATP-synt_ab_N"/>
    <property type="match status" value="1"/>
</dbReference>
<dbReference type="Pfam" id="PF22919">
    <property type="entry name" value="ATP-synt_VA_C"/>
    <property type="match status" value="1"/>
</dbReference>
<dbReference type="SMART" id="SM00382">
    <property type="entry name" value="AAA"/>
    <property type="match status" value="1"/>
</dbReference>
<dbReference type="SUPFAM" id="SSF47917">
    <property type="entry name" value="C-terminal domain of alpha and beta subunits of F1 ATP synthase"/>
    <property type="match status" value="1"/>
</dbReference>
<dbReference type="SUPFAM" id="SSF50615">
    <property type="entry name" value="N-terminal domain of alpha and beta subunits of F1 ATP synthase"/>
    <property type="match status" value="1"/>
</dbReference>
<dbReference type="SUPFAM" id="SSF52540">
    <property type="entry name" value="P-loop containing nucleoside triphosphate hydrolases"/>
    <property type="match status" value="1"/>
</dbReference>
<dbReference type="PROSITE" id="PS00152">
    <property type="entry name" value="ATPASE_ALPHA_BETA"/>
    <property type="match status" value="1"/>
</dbReference>
<organism>
    <name type="scientific">Synechococcus sp. (strain JA-3-3Ab)</name>
    <name type="common">Cyanobacteria bacterium Yellowstone A-Prime</name>
    <dbReference type="NCBI Taxonomy" id="321327"/>
    <lineage>
        <taxon>Bacteria</taxon>
        <taxon>Bacillati</taxon>
        <taxon>Cyanobacteriota</taxon>
        <taxon>Cyanophyceae</taxon>
        <taxon>Synechococcales</taxon>
        <taxon>Synechococcaceae</taxon>
        <taxon>Synechococcus</taxon>
    </lineage>
</organism>
<feature type="chain" id="PRO_0000254408" description="ATP synthase subunit beta">
    <location>
        <begin position="1"/>
        <end position="477"/>
    </location>
</feature>
<feature type="binding site" evidence="1">
    <location>
        <begin position="163"/>
        <end position="170"/>
    </location>
    <ligand>
        <name>ATP</name>
        <dbReference type="ChEBI" id="CHEBI:30616"/>
    </ligand>
</feature>
<accession>Q2JX57</accession>
<evidence type="ECO:0000255" key="1">
    <source>
        <dbReference type="HAMAP-Rule" id="MF_01347"/>
    </source>
</evidence>